<keyword id="KW-0012">Acyltransferase</keyword>
<keyword id="KW-0441">Lipid A biosynthesis</keyword>
<keyword id="KW-0444">Lipid biosynthesis</keyword>
<keyword id="KW-0443">Lipid metabolism</keyword>
<keyword id="KW-1185">Reference proteome</keyword>
<keyword id="KW-0677">Repeat</keyword>
<keyword id="KW-0808">Transferase</keyword>
<protein>
    <recommendedName>
        <fullName evidence="1">UDP-3-O-acylglucosamine N-acyltransferase</fullName>
        <ecNumber evidence="1">2.3.1.191</ecNumber>
    </recommendedName>
</protein>
<gene>
    <name evidence="1" type="primary">lpxD</name>
    <name type="ordered locus">Sfri_1280</name>
</gene>
<sequence length="340" mass="35420">MKVTLKELSQLLGATIKGDATLEITSVATLEDATQGQLSFLANSKYRAQLEATQASAVLLSEKEASCYHGNALIVSDPYVGFARVAQLLDTTPKETPGIHPSAQIDTSAILGDGAAIGANAVIGANVILGENVQIGPGCVVGESSIIGSNTRLWANVSVYHNVHIGHDCIVHSGTVIGSDGFGYANERGNWVKIPQTGGVRIGNHVEIGACTSIDRGALSHTEIHDGVIIDNQVQIAHNVVIGQNTAMAGGSIIAGSSTIGKYCIIGGGSAVAGHLSVADGVHISGGTNVTSVIREKGVYSSATIAMENKLWRRNTVRFRQLDELFSRVKTLEKSAKGSE</sequence>
<feature type="chain" id="PRO_0000264435" description="UDP-3-O-acylglucosamine N-acyltransferase">
    <location>
        <begin position="1"/>
        <end position="340"/>
    </location>
</feature>
<feature type="active site" description="Proton acceptor" evidence="1">
    <location>
        <position position="238"/>
    </location>
</feature>
<comment type="function">
    <text evidence="1">Catalyzes the N-acylation of UDP-3-O-acylglucosamine using 3-hydroxyacyl-ACP as the acyl donor. Is involved in the biosynthesis of lipid A, a phosphorylated glycolipid that anchors the lipopolysaccharide to the outer membrane of the cell.</text>
</comment>
<comment type="catalytic activity">
    <reaction evidence="1">
        <text>a UDP-3-O-[(3R)-3-hydroxyacyl]-alpha-D-glucosamine + a (3R)-hydroxyacyl-[ACP] = a UDP-2-N,3-O-bis[(3R)-3-hydroxyacyl]-alpha-D-glucosamine + holo-[ACP] + H(+)</text>
        <dbReference type="Rhea" id="RHEA:53836"/>
        <dbReference type="Rhea" id="RHEA-COMP:9685"/>
        <dbReference type="Rhea" id="RHEA-COMP:9945"/>
        <dbReference type="ChEBI" id="CHEBI:15378"/>
        <dbReference type="ChEBI" id="CHEBI:64479"/>
        <dbReference type="ChEBI" id="CHEBI:78827"/>
        <dbReference type="ChEBI" id="CHEBI:137740"/>
        <dbReference type="ChEBI" id="CHEBI:137748"/>
        <dbReference type="EC" id="2.3.1.191"/>
    </reaction>
</comment>
<comment type="pathway">
    <text evidence="1">Bacterial outer membrane biogenesis; LPS lipid A biosynthesis.</text>
</comment>
<comment type="subunit">
    <text evidence="1">Homotrimer.</text>
</comment>
<comment type="similarity">
    <text evidence="1">Belongs to the transferase hexapeptide repeat family. LpxD subfamily.</text>
</comment>
<evidence type="ECO:0000255" key="1">
    <source>
        <dbReference type="HAMAP-Rule" id="MF_00523"/>
    </source>
</evidence>
<organism>
    <name type="scientific">Shewanella frigidimarina (strain NCIMB 400)</name>
    <dbReference type="NCBI Taxonomy" id="318167"/>
    <lineage>
        <taxon>Bacteria</taxon>
        <taxon>Pseudomonadati</taxon>
        <taxon>Pseudomonadota</taxon>
        <taxon>Gammaproteobacteria</taxon>
        <taxon>Alteromonadales</taxon>
        <taxon>Shewanellaceae</taxon>
        <taxon>Shewanella</taxon>
    </lineage>
</organism>
<proteinExistence type="inferred from homology"/>
<dbReference type="EC" id="2.3.1.191" evidence="1"/>
<dbReference type="EMBL" id="CP000447">
    <property type="protein sequence ID" value="ABI71133.1"/>
    <property type="molecule type" value="Genomic_DNA"/>
</dbReference>
<dbReference type="RefSeq" id="WP_011636754.1">
    <property type="nucleotide sequence ID" value="NC_008345.1"/>
</dbReference>
<dbReference type="SMR" id="Q085D2"/>
<dbReference type="STRING" id="318167.Sfri_1280"/>
<dbReference type="KEGG" id="sfr:Sfri_1280"/>
<dbReference type="eggNOG" id="COG1044">
    <property type="taxonomic scope" value="Bacteria"/>
</dbReference>
<dbReference type="HOGENOM" id="CLU_049865_0_1_6"/>
<dbReference type="OrthoDB" id="9784739at2"/>
<dbReference type="UniPathway" id="UPA00973"/>
<dbReference type="Proteomes" id="UP000000684">
    <property type="component" value="Chromosome"/>
</dbReference>
<dbReference type="GO" id="GO:0016020">
    <property type="term" value="C:membrane"/>
    <property type="evidence" value="ECO:0007669"/>
    <property type="project" value="GOC"/>
</dbReference>
<dbReference type="GO" id="GO:0016410">
    <property type="term" value="F:N-acyltransferase activity"/>
    <property type="evidence" value="ECO:0007669"/>
    <property type="project" value="InterPro"/>
</dbReference>
<dbReference type="GO" id="GO:0009245">
    <property type="term" value="P:lipid A biosynthetic process"/>
    <property type="evidence" value="ECO:0007669"/>
    <property type="project" value="UniProtKB-UniRule"/>
</dbReference>
<dbReference type="CDD" id="cd03352">
    <property type="entry name" value="LbH_LpxD"/>
    <property type="match status" value="1"/>
</dbReference>
<dbReference type="Gene3D" id="1.20.5.170">
    <property type="match status" value="1"/>
</dbReference>
<dbReference type="Gene3D" id="2.160.10.10">
    <property type="entry name" value="Hexapeptide repeat proteins"/>
    <property type="match status" value="1"/>
</dbReference>
<dbReference type="Gene3D" id="3.40.1390.10">
    <property type="entry name" value="MurE/MurF, N-terminal domain"/>
    <property type="match status" value="1"/>
</dbReference>
<dbReference type="HAMAP" id="MF_00523">
    <property type="entry name" value="LpxD"/>
    <property type="match status" value="1"/>
</dbReference>
<dbReference type="InterPro" id="IPR001451">
    <property type="entry name" value="Hexapep"/>
</dbReference>
<dbReference type="InterPro" id="IPR018357">
    <property type="entry name" value="Hexapep_transf_CS"/>
</dbReference>
<dbReference type="InterPro" id="IPR007691">
    <property type="entry name" value="LpxD"/>
</dbReference>
<dbReference type="InterPro" id="IPR011004">
    <property type="entry name" value="Trimer_LpxA-like_sf"/>
</dbReference>
<dbReference type="InterPro" id="IPR020573">
    <property type="entry name" value="UDP_GlcNAc_AcTrfase_non-rep"/>
</dbReference>
<dbReference type="NCBIfam" id="TIGR01853">
    <property type="entry name" value="lipid_A_lpxD"/>
    <property type="match status" value="1"/>
</dbReference>
<dbReference type="NCBIfam" id="NF002060">
    <property type="entry name" value="PRK00892.1"/>
    <property type="match status" value="1"/>
</dbReference>
<dbReference type="PANTHER" id="PTHR43378">
    <property type="entry name" value="UDP-3-O-ACYLGLUCOSAMINE N-ACYLTRANSFERASE"/>
    <property type="match status" value="1"/>
</dbReference>
<dbReference type="PANTHER" id="PTHR43378:SF2">
    <property type="entry name" value="UDP-3-O-ACYLGLUCOSAMINE N-ACYLTRANSFERASE 1, MITOCHONDRIAL-RELATED"/>
    <property type="match status" value="1"/>
</dbReference>
<dbReference type="Pfam" id="PF00132">
    <property type="entry name" value="Hexapep"/>
    <property type="match status" value="2"/>
</dbReference>
<dbReference type="Pfam" id="PF04613">
    <property type="entry name" value="LpxD"/>
    <property type="match status" value="1"/>
</dbReference>
<dbReference type="SUPFAM" id="SSF51161">
    <property type="entry name" value="Trimeric LpxA-like enzymes"/>
    <property type="match status" value="1"/>
</dbReference>
<dbReference type="PROSITE" id="PS00101">
    <property type="entry name" value="HEXAPEP_TRANSFERASES"/>
    <property type="match status" value="2"/>
</dbReference>
<name>LPXD_SHEFN</name>
<reference key="1">
    <citation type="submission" date="2006-08" db="EMBL/GenBank/DDBJ databases">
        <title>Complete sequence of Shewanella frigidimarina NCIMB 400.</title>
        <authorList>
            <consortium name="US DOE Joint Genome Institute"/>
            <person name="Copeland A."/>
            <person name="Lucas S."/>
            <person name="Lapidus A."/>
            <person name="Barry K."/>
            <person name="Detter J.C."/>
            <person name="Glavina del Rio T."/>
            <person name="Hammon N."/>
            <person name="Israni S."/>
            <person name="Dalin E."/>
            <person name="Tice H."/>
            <person name="Pitluck S."/>
            <person name="Fredrickson J.K."/>
            <person name="Kolker E."/>
            <person name="McCuel L.A."/>
            <person name="DiChristina T."/>
            <person name="Nealson K.H."/>
            <person name="Newman D."/>
            <person name="Tiedje J.M."/>
            <person name="Zhou J."/>
            <person name="Romine M.F."/>
            <person name="Culley D.E."/>
            <person name="Serres M."/>
            <person name="Chertkov O."/>
            <person name="Brettin T."/>
            <person name="Bruce D."/>
            <person name="Han C."/>
            <person name="Tapia R."/>
            <person name="Gilna P."/>
            <person name="Schmutz J."/>
            <person name="Larimer F."/>
            <person name="Land M."/>
            <person name="Hauser L."/>
            <person name="Kyrpides N."/>
            <person name="Mikhailova N."/>
            <person name="Richardson P."/>
        </authorList>
    </citation>
    <scope>NUCLEOTIDE SEQUENCE [LARGE SCALE GENOMIC DNA]</scope>
    <source>
        <strain>NCIMB 400</strain>
    </source>
</reference>
<accession>Q085D2</accession>